<accession>P08703</accession>
<dbReference type="EC" id="1.21.3.1" evidence="5 6 7"/>
<dbReference type="EMBL" id="M15083">
    <property type="protein sequence ID" value="AAA33696.1"/>
    <property type="molecule type" value="Genomic_DNA"/>
</dbReference>
<dbReference type="EMBL" id="X17436">
    <property type="protein sequence ID" value="CAA35480.1"/>
    <property type="molecule type" value="Genomic_DNA"/>
</dbReference>
<dbReference type="PIR" id="A26467">
    <property type="entry name" value="A26467"/>
</dbReference>
<dbReference type="PIR" id="S04441">
    <property type="entry name" value="S04441"/>
</dbReference>
<dbReference type="SMR" id="P08703"/>
<dbReference type="ChEMBL" id="CHEMBL3158"/>
<dbReference type="BRENDA" id="1.21.3.1">
    <property type="organism ID" value="4606"/>
</dbReference>
<dbReference type="UniPathway" id="UPA00149">
    <property type="reaction ID" value="UER00240"/>
</dbReference>
<dbReference type="GO" id="GO:0005829">
    <property type="term" value="C:cytosol"/>
    <property type="evidence" value="ECO:0000314"/>
    <property type="project" value="GO_Central"/>
</dbReference>
<dbReference type="GO" id="GO:0051213">
    <property type="term" value="F:dioxygenase activity"/>
    <property type="evidence" value="ECO:0007669"/>
    <property type="project" value="UniProtKB-KW"/>
</dbReference>
<dbReference type="GO" id="GO:0005506">
    <property type="term" value="F:iron ion binding"/>
    <property type="evidence" value="ECO:0007669"/>
    <property type="project" value="InterPro"/>
</dbReference>
<dbReference type="GO" id="GO:0016216">
    <property type="term" value="F:isopenicillin-N synthase activity"/>
    <property type="evidence" value="ECO:0000314"/>
    <property type="project" value="GO_Central"/>
</dbReference>
<dbReference type="GO" id="GO:0042318">
    <property type="term" value="P:penicillin biosynthetic process"/>
    <property type="evidence" value="ECO:0000314"/>
    <property type="project" value="GO_Central"/>
</dbReference>
<dbReference type="Gene3D" id="2.60.120.330">
    <property type="entry name" value="B-lactam Antibiotic, Isopenicillin N Synthase, Chain"/>
    <property type="match status" value="1"/>
</dbReference>
<dbReference type="InterPro" id="IPR026992">
    <property type="entry name" value="DIOX_N"/>
</dbReference>
<dbReference type="InterPro" id="IPR044861">
    <property type="entry name" value="IPNS-like_FE2OG_OXY"/>
</dbReference>
<dbReference type="InterPro" id="IPR027443">
    <property type="entry name" value="IPNS-like_sf"/>
</dbReference>
<dbReference type="InterPro" id="IPR002057">
    <property type="entry name" value="Isopenicillin-N_synth_CS"/>
</dbReference>
<dbReference type="InterPro" id="IPR005123">
    <property type="entry name" value="Oxoglu/Fe-dep_dioxygenase_dom"/>
</dbReference>
<dbReference type="PANTHER" id="PTHR10209:SF867">
    <property type="entry name" value="2-OXOGLUTARATE (2OG) AND FE(II)-DEPENDENT OXYGENASE SUPERFAMILY PROTEIN"/>
    <property type="match status" value="1"/>
</dbReference>
<dbReference type="PANTHER" id="PTHR10209">
    <property type="entry name" value="OXIDOREDUCTASE, 2OG-FE II OXYGENASE FAMILY PROTEIN"/>
    <property type="match status" value="1"/>
</dbReference>
<dbReference type="Pfam" id="PF03171">
    <property type="entry name" value="2OG-FeII_Oxy"/>
    <property type="match status" value="1"/>
</dbReference>
<dbReference type="Pfam" id="PF14226">
    <property type="entry name" value="DIOX_N"/>
    <property type="match status" value="1"/>
</dbReference>
<dbReference type="PRINTS" id="PR00682">
    <property type="entry name" value="IPNSYNTHASE"/>
</dbReference>
<dbReference type="SUPFAM" id="SSF51197">
    <property type="entry name" value="Clavaminate synthase-like"/>
    <property type="match status" value="1"/>
</dbReference>
<dbReference type="PROSITE" id="PS51471">
    <property type="entry name" value="FE2OG_OXY"/>
    <property type="match status" value="1"/>
</dbReference>
<dbReference type="PROSITE" id="PS00185">
    <property type="entry name" value="IPNS_1"/>
    <property type="match status" value="1"/>
</dbReference>
<dbReference type="PROSITE" id="PS00186">
    <property type="entry name" value="IPNS_2"/>
    <property type="match status" value="1"/>
</dbReference>
<comment type="function">
    <text evidence="5 6 7 15">Isopenicillin N synthase; part of the gene cluster that mediates the biosynthesis of penicillin, the world's most important antibiotic (PubMed:1368505, PubMed:1369045, PubMed:1588566). IpnA catalyzes the cyclization of the tripeptide N-[(5S)-5-amino-5-carboxypentanoyl]-L-cysteinyl-D-valine (LLD-ACV or ACV) to form isopenicillin N (IPN) that contains the beta-lactam nucleus (PubMed:1368505, PubMed:1369045, PubMed:1588566). The penicillin biosynthesis occurs via 3 enzymatic steps, the first corresponding to the production of the tripeptide N-[(5S)-5-amino-5-carboxypentanoyl]-L-cysteinyl-D-valine (LLD-ACV or ACV) by the NRPS acvA. The tripeptide ACV is then cyclized to isopenicillin N (IPN) by the isopenicillin N synthase ipnA that forms the beta-lactam nucleus. Finally, the alpha-aminoadipyl side chain is exchanged for phenylacetic acid by the isopenicillin N acyltransferase aatA to yield penicillin in the peroxisomal matrix (Probable) (PubMed:1368505).</text>
</comment>
<comment type="catalytic activity">
    <reaction evidence="5 6 7">
        <text>N-[(5S)-5-amino-5-carboxypentanoyl]-L-cysteinyl-D-valine + O2 = isopenicillin N + 2 H2O</text>
        <dbReference type="Rhea" id="RHEA:22428"/>
        <dbReference type="ChEBI" id="CHEBI:15377"/>
        <dbReference type="ChEBI" id="CHEBI:15379"/>
        <dbReference type="ChEBI" id="CHEBI:58399"/>
        <dbReference type="ChEBI" id="CHEBI:58572"/>
        <dbReference type="EC" id="1.21.3.1"/>
    </reaction>
    <physiologicalReaction direction="left-to-right" evidence="5 6 7">
        <dbReference type="Rhea" id="RHEA:22429"/>
    </physiologicalReaction>
</comment>
<comment type="cofactor">
    <cofactor evidence="3">
        <name>Fe(2+)</name>
        <dbReference type="ChEBI" id="CHEBI:29033"/>
    </cofactor>
    <text evidence="3">Binds 1 Fe(2+) ion per subunit.</text>
</comment>
<comment type="pathway">
    <text evidence="5 6 7">Antibiotic biosynthesis; penicillin G biosynthesis; penicillin G from L-alpha-aminoadipate and L-cysteine and L-valine: step 2/3.</text>
</comment>
<comment type="subunit">
    <text evidence="1">Monomer.</text>
</comment>
<comment type="subcellular location">
    <subcellularLocation>
        <location evidence="4 8">Cytoplasm</location>
        <location evidence="4 8">Cytosol</location>
    </subcellularLocation>
</comment>
<comment type="induction">
    <text evidence="9 10 11">Expression is repressed by glucose (PubMed:3096965). The transcription factor rfx1 controls penicillin biosynthesis through the regulation of the acvA, ipnA and aatA transcription (PubMed:22960281). Expression is also controlled by the transcription factor pacC that specifically recognizes the 5'-GCCARG-3' sequence in the promoter (PubMed:8736532).</text>
</comment>
<comment type="similarity">
    <text evidence="14">Belongs to the iron/ascorbate-dependent oxidoreductase family.</text>
</comment>
<organism>
    <name type="scientific">Penicillium chrysogenum</name>
    <name type="common">Penicillium notatum</name>
    <dbReference type="NCBI Taxonomy" id="5076"/>
    <lineage>
        <taxon>Eukaryota</taxon>
        <taxon>Fungi</taxon>
        <taxon>Dikarya</taxon>
        <taxon>Ascomycota</taxon>
        <taxon>Pezizomycotina</taxon>
        <taxon>Eurotiomycetes</taxon>
        <taxon>Eurotiomycetidae</taxon>
        <taxon>Eurotiales</taxon>
        <taxon>Aspergillaceae</taxon>
        <taxon>Penicillium</taxon>
        <taxon>Penicillium chrysogenum species complex</taxon>
    </lineage>
</organism>
<protein>
    <recommendedName>
        <fullName evidence="13">Isopenicillin N synthase</fullName>
        <shortName evidence="13">IPNS</shortName>
        <ecNumber evidence="5 6 7">1.21.3.1</ecNumber>
    </recommendedName>
    <alternativeName>
        <fullName evidence="14">Isopenicillin cyclase</fullName>
    </alternativeName>
    <alternativeName>
        <fullName evidence="12">Penicillin biosynthetis cluster protein ipnA</fullName>
    </alternativeName>
</protein>
<sequence length="331" mass="37960">MASTPKANVPKIDVSPLFGDNMEEKMKVARAIDAASRDTGFFYAVNHGVDVKRLSNKTREFHFSITDEEKWDLAIRAYNKEHQDQIRAGYYLSIPEKKAVESFCYLNPNFKPDHPLIQSKTPTHEVNVWPDEKKHPGFREFAEQYYWDVFGLSSALLRGYALALGKEEDFFSRHFKKEDALSSVVLIRYPYLNPIPPAAIKTAEDGTKLSFEWHEDVSLITVLYQSDVANLQVEMPQGYLDIEADDNAYLVNCGSYMAHITNNYYPAPIHRVKWVNEERQSLPFFVNLGFNDTVQPWDPSKEDGKTDQRPISYGDYLQNGLVSLINKNGQT</sequence>
<reference key="1">
    <citation type="journal article" date="1986" name="Gene">
        <title>Cloning and expression of the isopenicillin N synthetase gene from Penicillium chrysogenum.</title>
        <authorList>
            <person name="Carr L.G."/>
            <person name="Skatrud P.L."/>
            <person name="Scheetz M.E. II"/>
            <person name="Queener S.W."/>
            <person name="Ingolia T.D."/>
        </authorList>
    </citation>
    <scope>NUCLEOTIDE SEQUENCE [GENOMIC DNA]</scope>
    <source>
        <strain>23X-80-269-37-2</strain>
    </source>
</reference>
<reference key="2">
    <citation type="journal article" date="1989" name="Mol. Gen. Genet.">
        <title>Cloning, sequence analysis and transcriptional study of the isopenicillin N synthase of Penicillium chrysogenum AS-P-78.</title>
        <authorList>
            <person name="Barrredo J.L."/>
            <person name="Cantoral J.M."/>
            <person name="Alvarez E."/>
            <person name="Diez B."/>
            <person name="Martin J.F."/>
        </authorList>
    </citation>
    <scope>NUCLEOTIDE SEQUENCE [GENOMIC DNA]</scope>
    <source>
        <strain>AS-P-78</strain>
    </source>
</reference>
<reference key="3">
    <citation type="journal article" date="1986" name="J. Bacteriol.">
        <title>Glucose represses formation of delta-(L-alpha-aminoadipyl)-L-cysteinyl-D-valine and isopenicillin N synthase but not penicillin acyltransferase in Penicillium chrysogenum.</title>
        <authorList>
            <person name="Revilla G."/>
            <person name="Ramos F.R."/>
            <person name="Lopez-Nieto M.J."/>
            <person name="Alvarez E."/>
            <person name="Martin J.F."/>
        </authorList>
    </citation>
    <scope>INDUCTION</scope>
</reference>
<reference key="4">
    <citation type="journal article" date="1990" name="Biotechnology (N.Y.)">
        <title>Cloning and heterologous expression of the penicillin biosynthetic gene cluster from penicillum chrysogenum.</title>
        <authorList>
            <person name="Smith D.J."/>
            <person name="Burnham M.K."/>
            <person name="Edwards J."/>
            <person name="Earl A.J."/>
            <person name="Turner G."/>
        </authorList>
    </citation>
    <scope>FUNCTION</scope>
    <scope>CATALYTIC ACTIVITY</scope>
    <scope>PATHWAY</scope>
</reference>
<reference key="5">
    <citation type="journal article" date="1991" name="EMBO J.">
        <title>Localization of the pathway of the penicillin biosynthesis in Penicillium chrysogenum.</title>
        <authorList>
            <person name="Mueller W.H."/>
            <person name="van der Krift T.P."/>
            <person name="Krouwer A.J."/>
            <person name="Woesten H.A."/>
            <person name="van der Voort L.H."/>
            <person name="Smaal E.B."/>
            <person name="Verkleij A.J."/>
        </authorList>
    </citation>
    <scope>SUBCELLULAR LOCATION</scope>
</reference>
<reference key="6">
    <citation type="journal article" date="1992" name="J. Chem. Technol. Biotechnol.">
        <title>Oxygen utilisation by isopenicillin N synthase from Penicillium chrysogenum.</title>
        <authorList>
            <person name="Bainbridge Z.A."/>
            <person name="Scott R.I."/>
            <person name="Perry D."/>
        </authorList>
    </citation>
    <scope>FUNCTION</scope>
    <scope>CATALYTIC ACTIVITY</scope>
    <scope>PATHWAY</scope>
</reference>
<reference key="7">
    <citation type="journal article" date="1992" name="J. Med. Chem.">
        <title>Substrate specificity of isopenicillin N synthase.</title>
        <authorList>
            <person name="Huffman G.W."/>
            <person name="Gesellchen P.D."/>
            <person name="Turner J.R."/>
            <person name="Rothenberger R.B."/>
            <person name="Osborne H.E."/>
            <person name="Miller F.D."/>
            <person name="Chapman J.L."/>
            <person name="Queener S.W."/>
        </authorList>
    </citation>
    <scope>FUNCTION</scope>
    <scope>CATALYTIC ACTIVITY</scope>
    <scope>SUBSTRATE SPECIFICITY</scope>
    <scope>PATHWAY</scope>
</reference>
<reference key="8">
    <citation type="journal article" date="1996" name="Mol. Microbiol.">
        <title>Characterization of a Penicillium chrysogenum gene encoding a PacC transcription factor and its binding sites in the divergent pcbAB-pcbC promoter of the penicillin biosynthetic cluster.</title>
        <authorList>
            <person name="Suarez T."/>
            <person name="Penalva M.A."/>
        </authorList>
    </citation>
    <scope>INDUCTION</scope>
</reference>
<reference key="9">
    <citation type="journal article" date="2002" name="Fungal Genet. Biol.">
        <title>delta-(L-alpha-Aminoadipyl)-L-cysteinyl-D-valine synthetase, that mediates the first committed step in penicillin biosynthesis, is a cytosolic enzyme.</title>
        <authorList>
            <person name="van der Lende T.R."/>
            <person name="van de Kamp M."/>
            <person name="Berg M."/>
            <person name="Sjollema K."/>
            <person name="Bovenberg R.A."/>
            <person name="Veenhuis M."/>
            <person name="Konings W.N."/>
            <person name="Driessen A.J."/>
        </authorList>
    </citation>
    <scope>SUBCELLULAR LOCATION</scope>
</reference>
<reference key="10">
    <citation type="journal article" date="2012" name="Fungal Genet. Biol.">
        <title>The regulatory factor PcRFX1 controls the expression of the three genes of beta-lactam biosynthesis in Penicillium chrysogenum.</title>
        <authorList>
            <person name="Dominguez-Santos R."/>
            <person name="Martin J.F."/>
            <person name="Kosalkova K."/>
            <person name="Prieto C."/>
            <person name="Ullan R.V."/>
            <person name="Garcia-Estrada C."/>
        </authorList>
    </citation>
    <scope>INDUCTION</scope>
</reference>
<keyword id="KW-0045">Antibiotic biosynthesis</keyword>
<keyword id="KW-0963">Cytoplasm</keyword>
<keyword id="KW-0223">Dioxygenase</keyword>
<keyword id="KW-0408">Iron</keyword>
<keyword id="KW-0479">Metal-binding</keyword>
<keyword id="KW-0560">Oxidoreductase</keyword>
<feature type="chain" id="PRO_0000219503" description="Isopenicillin N synthase">
    <location>
        <begin position="1"/>
        <end position="331"/>
    </location>
</feature>
<feature type="domain" description="Fe2OG dioxygenase" evidence="3">
    <location>
        <begin position="176"/>
        <end position="288"/>
    </location>
</feature>
<feature type="binding site" evidence="2">
    <location>
        <position position="87"/>
    </location>
    <ligand>
        <name>isopenicillin N</name>
        <dbReference type="ChEBI" id="CHEBI:58399"/>
    </ligand>
</feature>
<feature type="binding site" evidence="2">
    <location>
        <position position="87"/>
    </location>
    <ligand>
        <name>N-[(5S)-5-amino-5-carboxypentanoyl]-L-cysteinyl-D-valine</name>
        <dbReference type="ChEBI" id="CHEBI:58572"/>
    </ligand>
</feature>
<feature type="binding site" evidence="2">
    <location>
        <position position="91"/>
    </location>
    <ligand>
        <name>isopenicillin N</name>
        <dbReference type="ChEBI" id="CHEBI:58399"/>
    </ligand>
</feature>
<feature type="binding site" evidence="2">
    <location>
        <position position="91"/>
    </location>
    <ligand>
        <name>N-[(5S)-5-amino-5-carboxypentanoyl]-L-cysteinyl-D-valine</name>
        <dbReference type="ChEBI" id="CHEBI:58572"/>
    </ligand>
</feature>
<feature type="binding site" evidence="2">
    <location>
        <position position="183"/>
    </location>
    <ligand>
        <name>isopenicillin N</name>
        <dbReference type="ChEBI" id="CHEBI:58399"/>
    </ligand>
</feature>
<feature type="binding site" evidence="2">
    <location>
        <position position="183"/>
    </location>
    <ligand>
        <name>N-[(5S)-5-amino-5-carboxypentanoyl]-L-cysteinyl-D-valine</name>
        <dbReference type="ChEBI" id="CHEBI:58572"/>
    </ligand>
</feature>
<feature type="binding site" evidence="2">
    <location>
        <position position="189"/>
    </location>
    <ligand>
        <name>isopenicillin N</name>
        <dbReference type="ChEBI" id="CHEBI:58399"/>
    </ligand>
</feature>
<feature type="binding site" evidence="2">
    <location>
        <position position="189"/>
    </location>
    <ligand>
        <name>N-[(5S)-5-amino-5-carboxypentanoyl]-L-cysteinyl-D-valine</name>
        <dbReference type="ChEBI" id="CHEBI:58572"/>
    </ligand>
</feature>
<feature type="binding site" evidence="3">
    <location>
        <position position="214"/>
    </location>
    <ligand>
        <name>Fe(2+)</name>
        <dbReference type="ChEBI" id="CHEBI:29033"/>
    </ligand>
</feature>
<feature type="binding site" evidence="2">
    <location>
        <position position="214"/>
    </location>
    <ligand>
        <name>N-[(5S)-5-amino-5-carboxypentanoyl]-L-cysteinyl-D-valine</name>
        <dbReference type="ChEBI" id="CHEBI:58572"/>
    </ligand>
</feature>
<feature type="binding site" evidence="3">
    <location>
        <position position="216"/>
    </location>
    <ligand>
        <name>Fe(2+)</name>
        <dbReference type="ChEBI" id="CHEBI:29033"/>
    </ligand>
</feature>
<feature type="binding site" evidence="2">
    <location>
        <position position="216"/>
    </location>
    <ligand>
        <name>N-[(5S)-5-amino-5-carboxypentanoyl]-L-cysteinyl-D-valine</name>
        <dbReference type="ChEBI" id="CHEBI:58572"/>
    </ligand>
</feature>
<feature type="binding site" evidence="3">
    <location>
        <position position="270"/>
    </location>
    <ligand>
        <name>Fe(2+)</name>
        <dbReference type="ChEBI" id="CHEBI:29033"/>
    </ligand>
</feature>
<feature type="binding site" evidence="3">
    <location>
        <position position="279"/>
    </location>
    <ligand>
        <name>2-oxoglutarate</name>
        <dbReference type="ChEBI" id="CHEBI:16810"/>
    </ligand>
</feature>
<feature type="binding site" evidence="2">
    <location>
        <position position="281"/>
    </location>
    <ligand>
        <name>isopenicillin N</name>
        <dbReference type="ChEBI" id="CHEBI:58399"/>
    </ligand>
</feature>
<feature type="binding site" evidence="2">
    <location>
        <position position="281"/>
    </location>
    <ligand>
        <name>N-[(5S)-5-amino-5-carboxypentanoyl]-L-cysteinyl-D-valine</name>
        <dbReference type="ChEBI" id="CHEBI:58572"/>
    </ligand>
</feature>
<feature type="site" description="Transition state stabilizer" evidence="2">
    <location>
        <position position="211"/>
    </location>
</feature>
<feature type="sequence variant" description="In strain: AS-P-78.">
    <original>I</original>
    <variation>Y</variation>
    <location>
        <position position="195"/>
    </location>
</feature>
<evidence type="ECO:0000250" key="1">
    <source>
        <dbReference type="UniProtKB" id="P05189"/>
    </source>
</evidence>
<evidence type="ECO:0000250" key="2">
    <source>
        <dbReference type="UniProtKB" id="P05326"/>
    </source>
</evidence>
<evidence type="ECO:0000255" key="3">
    <source>
        <dbReference type="PROSITE-ProRule" id="PRU00805"/>
    </source>
</evidence>
<evidence type="ECO:0000269" key="4">
    <source>
    </source>
</evidence>
<evidence type="ECO:0000269" key="5">
    <source>
    </source>
</evidence>
<evidence type="ECO:0000269" key="6">
    <source>
    </source>
</evidence>
<evidence type="ECO:0000269" key="7">
    <source>
    </source>
</evidence>
<evidence type="ECO:0000269" key="8">
    <source>
    </source>
</evidence>
<evidence type="ECO:0000269" key="9">
    <source>
    </source>
</evidence>
<evidence type="ECO:0000269" key="10">
    <source>
    </source>
</evidence>
<evidence type="ECO:0000269" key="11">
    <source>
    </source>
</evidence>
<evidence type="ECO:0000303" key="12">
    <source>
    </source>
</evidence>
<evidence type="ECO:0000303" key="13">
    <source>
    </source>
</evidence>
<evidence type="ECO:0000305" key="14"/>
<evidence type="ECO:0000305" key="15">
    <source>
    </source>
</evidence>
<name>IPNA_PENCH</name>
<proteinExistence type="evidence at protein level"/>
<gene>
    <name evidence="13" type="primary">ipnA</name>
    <name type="synonym">pcbC</name>
</gene>